<feature type="signal peptide" evidence="2">
    <location>
        <begin position="1"/>
        <end position="20"/>
    </location>
</feature>
<feature type="chain" id="PRO_0000343684" description="Scavenger receptor cysteine-rich domain-containing protein DMBT1">
    <location>
        <begin position="21"/>
        <end position="1594"/>
    </location>
</feature>
<feature type="domain" description="SRCR 1" evidence="4">
    <location>
        <begin position="53"/>
        <end position="153"/>
    </location>
</feature>
<feature type="domain" description="SRCR 2" evidence="4">
    <location>
        <begin position="192"/>
        <end position="292"/>
    </location>
</feature>
<feature type="domain" description="SRCR 3" evidence="4">
    <location>
        <begin position="323"/>
        <end position="423"/>
    </location>
</feature>
<feature type="domain" description="SRCR 4" evidence="4">
    <location>
        <begin position="454"/>
        <end position="551"/>
    </location>
</feature>
<feature type="domain" description="SRCR 5" evidence="4">
    <location>
        <begin position="582"/>
        <end position="682"/>
    </location>
</feature>
<feature type="domain" description="SRCR 6" evidence="4">
    <location>
        <begin position="713"/>
        <end position="813"/>
    </location>
</feature>
<feature type="domain" description="SRCR 7" evidence="4">
    <location>
        <begin position="821"/>
        <end position="921"/>
    </location>
</feature>
<feature type="domain" description="CUB 1" evidence="3">
    <location>
        <begin position="951"/>
        <end position="1061"/>
    </location>
</feature>
<feature type="domain" description="SRCR 8" evidence="4">
    <location>
        <begin position="1067"/>
        <end position="1170"/>
    </location>
</feature>
<feature type="domain" description="CUB 2" evidence="3">
    <location>
        <begin position="1192"/>
        <end position="1301"/>
    </location>
</feature>
<feature type="domain" description="ZP" evidence="5">
    <location>
        <begin position="1310"/>
        <end position="1558"/>
    </location>
</feature>
<feature type="glycosylation site" description="N-linked (GlcNAc...) asparagine" evidence="2">
    <location>
        <position position="196"/>
    </location>
</feature>
<feature type="glycosylation site" description="N-linked (GlcNAc...) asparagine" evidence="2">
    <location>
        <position position="327"/>
    </location>
</feature>
<feature type="glycosylation site" description="N-linked (GlcNAc...) asparagine" evidence="2">
    <location>
        <position position="458"/>
    </location>
</feature>
<feature type="glycosylation site" description="N-linked (GlcNAc...) asparagine" evidence="2">
    <location>
        <position position="717"/>
    </location>
</feature>
<feature type="disulfide bond" evidence="1">
    <location>
        <begin position="78"/>
        <end position="142"/>
    </location>
</feature>
<feature type="disulfide bond" evidence="1">
    <location>
        <begin position="91"/>
        <end position="152"/>
    </location>
</feature>
<feature type="disulfide bond" evidence="1">
    <location>
        <begin position="122"/>
        <end position="132"/>
    </location>
</feature>
<feature type="disulfide bond" evidence="1">
    <location>
        <begin position="217"/>
        <end position="281"/>
    </location>
</feature>
<feature type="disulfide bond" evidence="1">
    <location>
        <begin position="230"/>
        <end position="291"/>
    </location>
</feature>
<feature type="disulfide bond" evidence="1">
    <location>
        <begin position="261"/>
        <end position="271"/>
    </location>
</feature>
<feature type="disulfide bond" evidence="1">
    <location>
        <begin position="348"/>
        <end position="412"/>
    </location>
</feature>
<feature type="disulfide bond" evidence="1">
    <location>
        <begin position="361"/>
        <end position="422"/>
    </location>
</feature>
<feature type="disulfide bond" evidence="1">
    <location>
        <begin position="392"/>
        <end position="402"/>
    </location>
</feature>
<feature type="disulfide bond" evidence="1">
    <location>
        <begin position="476"/>
        <end position="540"/>
    </location>
</feature>
<feature type="disulfide bond" evidence="1">
    <location>
        <begin position="489"/>
        <end position="550"/>
    </location>
</feature>
<feature type="disulfide bond" evidence="1">
    <location>
        <begin position="520"/>
        <end position="530"/>
    </location>
</feature>
<feature type="disulfide bond" evidence="1">
    <location>
        <begin position="607"/>
        <end position="671"/>
    </location>
</feature>
<feature type="disulfide bond" evidence="1">
    <location>
        <begin position="620"/>
        <end position="681"/>
    </location>
</feature>
<feature type="disulfide bond" evidence="1">
    <location>
        <begin position="651"/>
        <end position="661"/>
    </location>
</feature>
<feature type="disulfide bond" evidence="1">
    <location>
        <begin position="738"/>
        <end position="802"/>
    </location>
</feature>
<feature type="disulfide bond" evidence="1">
    <location>
        <begin position="751"/>
        <end position="812"/>
    </location>
</feature>
<feature type="disulfide bond" evidence="1">
    <location>
        <begin position="782"/>
        <end position="792"/>
    </location>
</feature>
<feature type="disulfide bond" evidence="1">
    <location>
        <begin position="846"/>
        <end position="910"/>
    </location>
</feature>
<feature type="disulfide bond" evidence="1">
    <location>
        <begin position="859"/>
        <end position="920"/>
    </location>
</feature>
<feature type="disulfide bond" evidence="1">
    <location>
        <begin position="890"/>
        <end position="900"/>
    </location>
</feature>
<feature type="disulfide bond" evidence="1">
    <location>
        <begin position="951"/>
        <end position="977"/>
    </location>
</feature>
<feature type="disulfide bond" evidence="1">
    <location>
        <begin position="1004"/>
        <end position="1025"/>
    </location>
</feature>
<feature type="disulfide bond" evidence="1">
    <location>
        <begin position="1095"/>
        <end position="1159"/>
    </location>
</feature>
<feature type="disulfide bond" evidence="1">
    <location>
        <begin position="1108"/>
        <end position="1169"/>
    </location>
</feature>
<feature type="disulfide bond" evidence="1">
    <location>
        <begin position="1139"/>
        <end position="1149"/>
    </location>
</feature>
<feature type="disulfide bond" evidence="1">
    <location>
        <begin position="1192"/>
        <end position="1218"/>
    </location>
</feature>
<feature type="disulfide bond" evidence="1">
    <location>
        <begin position="1243"/>
        <end position="1265"/>
    </location>
</feature>
<feature type="disulfide bond" evidence="1">
    <location>
        <begin position="1479"/>
        <end position="1537"/>
    </location>
</feature>
<feature type="splice variant" id="VSP_034658" description="In isoform 2." evidence="8">
    <original>EVFPSGLELRLANGGDRCQGRVEVLYQGSWGTVCDDGWDINDAQVVCRQLGCGMAVSAPGSARFGQGPGQIVLDDVSCSGQEPYLWSCHHRGWLSHNCGHQEDAGVICSDAMAMTSPPPDTWPTTVIYESTPHFPSGLELVFPSGLELRLANGSDRCQGRVEVLYQGSWGTVCDDGWDINDAQVVCRQLGCGMAVSAPGSARFGQGPGQIVLDDVSCSGQEPYLWSCHHRGWLSHNCGHQEDAGVICSDAVPTTTPPP</original>
    <variation>TE</variation>
    <location>
        <begin position="45"/>
        <end position="302"/>
    </location>
</feature>
<feature type="splice variant" id="VSP_034659" description="In isoform 2." evidence="8">
    <location>
        <begin position="361"/>
        <end position="488"/>
    </location>
</feature>
<feature type="sequence conflict" description="In Ref. 2; AAD50330." evidence="9" ref="2">
    <original>E</original>
    <variation>EA</variation>
    <location>
        <position position="40"/>
    </location>
</feature>
<feature type="sequence conflict" description="In Ref. 2; AAD50332/AAD50331." evidence="9" ref="2">
    <original>T</original>
    <variation>A</variation>
    <location>
        <position position="41"/>
    </location>
</feature>
<feature type="sequence conflict" description="In Ref. 2; AAD50330." evidence="9" ref="2">
    <original>S</original>
    <variation>T</variation>
    <location>
        <position position="160"/>
    </location>
</feature>
<feature type="sequence conflict" description="In Ref. 2; AAD50330." evidence="9" ref="2">
    <original>HFPSGLELV</original>
    <variation>L</variation>
    <location>
        <begin position="177"/>
        <end position="185"/>
    </location>
</feature>
<feature type="sequence conflict" description="In Ref. 2; AAD50330." evidence="9" ref="2">
    <original>S</original>
    <variation>G</variation>
    <location>
        <position position="198"/>
    </location>
</feature>
<feature type="sequence conflict" description="In Ref. 2; AAD50332/AAD50331." evidence="9" ref="2">
    <original>S</original>
    <variation>T</variation>
    <location>
        <position position="314"/>
    </location>
</feature>
<feature type="sequence conflict" description="In Ref. 2; AAD50332/AAD50331." evidence="9" ref="2">
    <original>S</original>
    <variation>G</variation>
    <location>
        <position position="329"/>
    </location>
</feature>
<feature type="sequence conflict" description="In Ref. 2; AAD50332/AAD50331." evidence="9" ref="2">
    <original>H</original>
    <variation>L</variation>
    <location>
        <position position="575"/>
    </location>
</feature>
<feature type="sequence conflict" description="In Ref. 2; AAD50332/AAD50331." evidence="9" ref="2">
    <original>S</original>
    <variation>G</variation>
    <location>
        <position position="588"/>
    </location>
</feature>
<feature type="sequence conflict" description="In Ref. 2; AAD50332/AAD50331." evidence="9" ref="2">
    <original>T</original>
    <variation>M</variation>
    <location>
        <position position="627"/>
    </location>
</feature>
<feature type="sequence conflict" description="In Ref. 1; AA sequence." evidence="9" ref="1">
    <original>L</original>
    <variation>I</variation>
    <location>
        <position position="744"/>
    </location>
</feature>
<evidence type="ECO:0000250" key="1"/>
<evidence type="ECO:0000255" key="2"/>
<evidence type="ECO:0000255" key="3">
    <source>
        <dbReference type="PROSITE-ProRule" id="PRU00059"/>
    </source>
</evidence>
<evidence type="ECO:0000255" key="4">
    <source>
        <dbReference type="PROSITE-ProRule" id="PRU00196"/>
    </source>
</evidence>
<evidence type="ECO:0000255" key="5">
    <source>
        <dbReference type="PROSITE-ProRule" id="PRU00375"/>
    </source>
</evidence>
<evidence type="ECO:0000269" key="6">
    <source>
    </source>
</evidence>
<evidence type="ECO:0000269" key="7">
    <source>
    </source>
</evidence>
<evidence type="ECO:0000303" key="8">
    <source>
    </source>
</evidence>
<evidence type="ECO:0000305" key="9"/>
<gene>
    <name type="primary">Dmbt1</name>
</gene>
<keyword id="KW-0025">Alternative splicing</keyword>
<keyword id="KW-0217">Developmental protein</keyword>
<keyword id="KW-0221">Differentiation</keyword>
<keyword id="KW-0903">Direct protein sequencing</keyword>
<keyword id="KW-1015">Disulfide bond</keyword>
<keyword id="KW-0325">Glycoprotein</keyword>
<keyword id="KW-0653">Protein transport</keyword>
<keyword id="KW-1185">Reference proteome</keyword>
<keyword id="KW-0677">Repeat</keyword>
<keyword id="KW-0964">Secreted</keyword>
<keyword id="KW-0732">Signal</keyword>
<keyword id="KW-0813">Transport</keyword>
<protein>
    <recommendedName>
        <fullName evidence="9">Scavenger receptor cysteine-rich domain-containing protein DMBT1</fullName>
    </recommendedName>
    <alternativeName>
        <fullName>Deleted in malignant brain tumors 1 protein</fullName>
    </alternativeName>
    <alternativeName>
        <fullName>Hensin</fullName>
    </alternativeName>
</protein>
<reference key="1">
    <citation type="journal article" date="1996" name="J. Clin. Invest.">
        <title>Hensin, a new collecting duct protein involved in the in vitro plasticity of intercalated cell polarity.</title>
        <authorList>
            <person name="Takito J."/>
            <person name="Hikita C."/>
            <person name="Al-Awqati Q."/>
        </authorList>
    </citation>
    <scope>NUCLEOTIDE SEQUENCE [MRNA] (ISOFORM 1)</scope>
    <scope>PROTEIN SEQUENCE OF 93-129; 732-751 AND 1083-1090</scope>
    <scope>SUBCELLULAR LOCATION</scope>
    <scope>TISSUE SPECIFICITY</scope>
    <source>
        <tissue>Kidney</tissue>
    </source>
</reference>
<reference key="2">
    <citation type="journal article" date="1999" name="Am. J. Physiol.">
        <title>Hensin, the polarity reversal protein, is encoded by DMBT1, a gene frequently deleted in malignant gliomas.</title>
        <authorList>
            <person name="Takito J."/>
            <person name="Yan L."/>
            <person name="Ma J."/>
            <person name="Hikita C."/>
            <person name="Vijayakumar S."/>
            <person name="Warburton D."/>
            <person name="Al-Awqati Q."/>
        </authorList>
    </citation>
    <scope>NUCLEOTIDE SEQUENCE [GENOMIC DNA / MRNA] (ISOFORMS 1 AND 2)</scope>
    <scope>GLYCOSYLATION</scope>
    <scope>TISSUE SPECIFICITY</scope>
</reference>
<organism>
    <name type="scientific">Oryctolagus cuniculus</name>
    <name type="common">Rabbit</name>
    <dbReference type="NCBI Taxonomy" id="9986"/>
    <lineage>
        <taxon>Eukaryota</taxon>
        <taxon>Metazoa</taxon>
        <taxon>Chordata</taxon>
        <taxon>Craniata</taxon>
        <taxon>Vertebrata</taxon>
        <taxon>Euteleostomi</taxon>
        <taxon>Mammalia</taxon>
        <taxon>Eutheria</taxon>
        <taxon>Euarchontoglires</taxon>
        <taxon>Glires</taxon>
        <taxon>Lagomorpha</taxon>
        <taxon>Leporidae</taxon>
        <taxon>Oryctolagus</taxon>
    </lineage>
</organism>
<sequence length="1594" mass="172764">MGISTVLALSLLWGPALSQGQWIPYTTYHDSVSSPGAPVETTTTEVFPSGLELRLANGGDRCQGRVEVLYQGSWGTVCDDGWDINDAQVVCRQLGCGMAVSAPGSARFGQGPGQIVLDDVSCSGQEPYLWSCHHRGWLSHNCGHQEDAGVICSDAMAMTSPPPDTWPTTVIYESTPHFPSGLELVFPSGLELRLANGSDRCQGRVEVLYQGSWGTVCDDGWDINDAQVVCRQLGCGMAVSAPGSARFGQGPGQIVLDDVSCSGQEPYLWSCHHRGWLSHNCGHQEDAGVICSDAVPTTTPPPDTWPTTVIYESSPVFPSGLELRLANGSDRCQGRVEVLYQGSWGTVCDDGWDINDAQVVCRQLGCGTAVSAPGSARFGQGPGQIVLDDVSCSGQEPYLWSCHHRGWLSHNCGHQEDAGVICSDAMAMTTPLPDTWPTTVIHESTPVFPSGLELQLANGSDRCQGRVEVLYQGTVCDDGWDINDAQVVCRQLGCGMAVSAPGSARFGQGPGQIVLDDVSCSGQEPYLWSCHHRGWLSHNCGHQEDAGVICSDAMAMTTPPPDTWPTTVIYESTPHFPSGLELRLANGSDRCQGRVEVLYQGSWGTVCDDGWDINDAQVVCRQLGCGTAVSAPGSARFGQGPGQIVLDDVSCSGQEPYLWSCHHRGWLSHNCGHQEDAGVICSGAMDTTTPLPDTWPTTVIYESTPVHISGLQLRLVNGSDRCEGRVEVLYQGSWGTVCDDSWDLNDASVVCRQLGCGTALSAPASAQFGQSSGSIVLDDVSCSGSEPNLWSCSHRGWLSHNCGHHEDAGVVCSGPDSRLAVRLVNGSTRCQGRVEVLYRGSWGTVCDDSWDINDASVVCRQLGCGWAVSAPGSARFGQGSGSIFLDEVSCSGQEPYLWNCSHRGWLSHNCGHYEDAGVICSDGWTTVTPPAPTTDWWEPTVTTTVGPSSNCGGFLYNATGSFSSPSYPGYYPNNALCVWEIAVPSGYLINLGFSQLRLEQHSYCNFDYVEIFDGSTDSSLLGKICNDSGQIFTTSSNRMTVLFRSDISVQNTGFLAWYNSFPRDASLRLVSGNSSYGACAGRVEIYHGGRWGTVCDDSWDTQDAQVVCRQLQCGDAVSAPGGAYFGSGSGPITLDDVNCSGTEATLWQCRSQSWFSHNCGHHEDASVICTGNYGTTTASVPNISTSNASYSCGGFLSQHSGRFSSPFYPGNYPNNARCVWDIEVQNNYQVTVTFTDVQLEGGCQYDYIEVFDGPYHSSPLIARVCDGARGSFTSSSNFLSVRFVSDGSITRRGFQAEFYSLPSNDSTNLLCLMNHMQASVSRAYLQSLGFSAWELVVSGWNGNYQCQRQITPSQVIFTIPYSGCGTIKQVDNETITYSNFLKAAVSSGVIKRKKDLHIHVSCRMLQDSWVHTMYIANDTIEVSEVQYSNFNVNVSFYTSSSFSYPVTSSPYYVDLDQNLYLQAEILHSDASLALFVDTCVASPNPNDFTSVTYDLIRSGCVRDETYRSYAQPSPRVVRFRFNSFHFLNRFPAVYLRCKMVVCRAYDYSSRCYRGCVVRSKRDVGSYQERVDVVLGPIQLLDPPAGKKSPGKGSP</sequence>
<comment type="function">
    <text evidence="1">May play roles in mucosal defense system and cellular immune defense. May play a role in liver regeneration. May be an important factor in fate decision and differentiation of transit-amplifying ductular (oval) cells within the hepatic lineage. May function as a binding protein in saliva for the regulation of taste sensation. May play a role as an opsonin receptor for SFTPD and SPAR in macrophage tissues throughout the body, including epithelial cells lining the gastrointestinal tract. Required for terminal differentiation of columnar epithelial cells during early embryogenesis. Displays a broad calcium-dependent binding spectrum against both Gram-positive and Gram-negative bacteria, suggesting a role in defense against bacterial pathogens. Binds to a range of poly-sulfated and poly-phosphorylated ligands which may explain its broad bacterial-binding specificity. Inhibits cytoinvasion of S.enterica. Associates with the actin cytoskeleton and is involved in its remodeling during regulated exocytosis. Interacts with pancreatic zymogens in a pH-dependent manner and may act as a Golgi cargo receptor in the regulated secretory pathway of the pancreatic acinar cell (By similarity).</text>
</comment>
<comment type="subunit">
    <text evidence="1">Interacts with LGALS3. Binds SFTPD and SPAR in a calcium-dependent manner (By similarity).</text>
</comment>
<comment type="subcellular location">
    <subcellularLocation>
        <location evidence="7">Secreted</location>
    </subcellularLocation>
</comment>
<comment type="alternative products">
    <event type="alternative splicing"/>
    <isoform>
        <id>Q95218-1</id>
        <name>1</name>
        <sequence type="displayed"/>
    </isoform>
    <isoform>
        <id>Q95218-2</id>
        <name>2</name>
        <sequence type="described" ref="VSP_034658 VSP_034659"/>
    </isoform>
</comment>
<comment type="tissue specificity">
    <text evidence="6 7">Expressed in small intestine, liver, stomach and kidney. Present in small intestine and in collecting tubules of kidney cortex, medulla and papilla (at protein level).</text>
</comment>
<comment type="domain">
    <text evidence="1">The SRCR domains mediate binding to bacteria.</text>
</comment>
<comment type="PTM">
    <text evidence="1">Highly N- and O-glycosylated. The O-glycans are heavily sulfated (By similarity).</text>
</comment>
<comment type="similarity">
    <text evidence="9">Belongs to the DMBT1 family.</text>
</comment>
<name>DMBT1_RABIT</name>
<dbReference type="EMBL" id="AF043112">
    <property type="protein sequence ID" value="AAD02242.1"/>
    <property type="molecule type" value="mRNA"/>
</dbReference>
<dbReference type="EMBL" id="AF078900">
    <property type="protein sequence ID" value="AAD50330.1"/>
    <property type="molecule type" value="Genomic_DNA"/>
</dbReference>
<dbReference type="EMBL" id="AF078900">
    <property type="protein sequence ID" value="AAD50331.1"/>
    <property type="molecule type" value="Genomic_DNA"/>
</dbReference>
<dbReference type="EMBL" id="AF078900">
    <property type="protein sequence ID" value="AAD50332.1"/>
    <property type="molecule type" value="Genomic_DNA"/>
</dbReference>
<dbReference type="PIR" id="T30549">
    <property type="entry name" value="T30549"/>
</dbReference>
<dbReference type="RefSeq" id="NP_001075502.1">
    <property type="nucleotide sequence ID" value="NM_001082033.1"/>
</dbReference>
<dbReference type="SMR" id="Q95218"/>
<dbReference type="FunCoup" id="Q95218">
    <property type="interactions" value="15"/>
</dbReference>
<dbReference type="STRING" id="9986.ENSOCUP00000042664"/>
<dbReference type="GlyCosmos" id="Q95218">
    <property type="glycosylation" value="4 sites, No reported glycans"/>
</dbReference>
<dbReference type="PaxDb" id="9986-ENSOCUP00000011615"/>
<dbReference type="InParanoid" id="Q95218"/>
<dbReference type="Proteomes" id="UP000001811">
    <property type="component" value="Unplaced"/>
</dbReference>
<dbReference type="GO" id="GO:0031012">
    <property type="term" value="C:extracellular matrix"/>
    <property type="evidence" value="ECO:0000250"/>
    <property type="project" value="UniProtKB"/>
</dbReference>
<dbReference type="GO" id="GO:0005576">
    <property type="term" value="C:extracellular region"/>
    <property type="evidence" value="ECO:0007669"/>
    <property type="project" value="UniProtKB-SubCell"/>
</dbReference>
<dbReference type="GO" id="GO:0042589">
    <property type="term" value="C:zymogen granule membrane"/>
    <property type="evidence" value="ECO:0000250"/>
    <property type="project" value="UniProtKB"/>
</dbReference>
<dbReference type="GO" id="GO:0035375">
    <property type="term" value="F:zymogen binding"/>
    <property type="evidence" value="ECO:0000250"/>
    <property type="project" value="UniProtKB"/>
</dbReference>
<dbReference type="GO" id="GO:0030154">
    <property type="term" value="P:cell differentiation"/>
    <property type="evidence" value="ECO:0007669"/>
    <property type="project" value="UniProtKB-KW"/>
</dbReference>
<dbReference type="GO" id="GO:0045217">
    <property type="term" value="P:cell-cell junction maintenance"/>
    <property type="evidence" value="ECO:0007669"/>
    <property type="project" value="TreeGrafter"/>
</dbReference>
<dbReference type="GO" id="GO:0050829">
    <property type="term" value="P:defense response to Gram-negative bacterium"/>
    <property type="evidence" value="ECO:0000250"/>
    <property type="project" value="UniProtKB"/>
</dbReference>
<dbReference type="GO" id="GO:0050830">
    <property type="term" value="P:defense response to Gram-positive bacterium"/>
    <property type="evidence" value="ECO:0000250"/>
    <property type="project" value="UniProtKB"/>
</dbReference>
<dbReference type="GO" id="GO:0015031">
    <property type="term" value="P:protein transport"/>
    <property type="evidence" value="ECO:0007669"/>
    <property type="project" value="UniProtKB-KW"/>
</dbReference>
<dbReference type="CDD" id="cd00041">
    <property type="entry name" value="CUB"/>
    <property type="match status" value="2"/>
</dbReference>
<dbReference type="FunFam" id="2.60.40.3210:FF:000005">
    <property type="entry name" value="Deleted in malignant brain tumors 1"/>
    <property type="match status" value="1"/>
</dbReference>
<dbReference type="FunFam" id="2.60.40.4100:FF:000005">
    <property type="entry name" value="Deleted in malignant brain tumors 1"/>
    <property type="match status" value="1"/>
</dbReference>
<dbReference type="FunFam" id="3.10.250.10:FF:000003">
    <property type="entry name" value="Deleted in malignant brain tumors 1"/>
    <property type="match status" value="8"/>
</dbReference>
<dbReference type="FunFam" id="2.60.120.290:FF:000004">
    <property type="entry name" value="Metalloendopeptidase"/>
    <property type="match status" value="2"/>
</dbReference>
<dbReference type="Gene3D" id="2.60.120.290">
    <property type="entry name" value="Spermadhesin, CUB domain"/>
    <property type="match status" value="2"/>
</dbReference>
<dbReference type="Gene3D" id="3.10.250.10">
    <property type="entry name" value="SRCR-like domain"/>
    <property type="match status" value="8"/>
</dbReference>
<dbReference type="Gene3D" id="2.60.40.4100">
    <property type="entry name" value="Zona pellucida, ZP-C domain"/>
    <property type="match status" value="1"/>
</dbReference>
<dbReference type="Gene3D" id="2.60.40.3210">
    <property type="entry name" value="Zona pellucida, ZP-N domain"/>
    <property type="match status" value="1"/>
</dbReference>
<dbReference type="InterPro" id="IPR000859">
    <property type="entry name" value="CUB_dom"/>
</dbReference>
<dbReference type="InterPro" id="IPR053243">
    <property type="entry name" value="SJ_maturation_regulator"/>
</dbReference>
<dbReference type="InterPro" id="IPR035914">
    <property type="entry name" value="Sperma_CUB_dom_sf"/>
</dbReference>
<dbReference type="InterPro" id="IPR001190">
    <property type="entry name" value="SRCR"/>
</dbReference>
<dbReference type="InterPro" id="IPR036772">
    <property type="entry name" value="SRCR-like_dom_sf"/>
</dbReference>
<dbReference type="InterPro" id="IPR055355">
    <property type="entry name" value="ZP-C"/>
</dbReference>
<dbReference type="InterPro" id="IPR042235">
    <property type="entry name" value="ZP-C_dom"/>
</dbReference>
<dbReference type="InterPro" id="IPR055356">
    <property type="entry name" value="ZP-N"/>
</dbReference>
<dbReference type="InterPro" id="IPR001507">
    <property type="entry name" value="ZP_dom"/>
</dbReference>
<dbReference type="InterPro" id="IPR017977">
    <property type="entry name" value="ZP_dom_CS"/>
</dbReference>
<dbReference type="PANTHER" id="PTHR47653:SF1">
    <property type="entry name" value="DELETED IN MALIGNANT BRAIN TUMORS 1 PROTEIN"/>
    <property type="match status" value="1"/>
</dbReference>
<dbReference type="PANTHER" id="PTHR47653">
    <property type="entry name" value="PROTEIN BARK BEETLE"/>
    <property type="match status" value="1"/>
</dbReference>
<dbReference type="Pfam" id="PF00431">
    <property type="entry name" value="CUB"/>
    <property type="match status" value="2"/>
</dbReference>
<dbReference type="Pfam" id="PF00530">
    <property type="entry name" value="SRCR"/>
    <property type="match status" value="8"/>
</dbReference>
<dbReference type="Pfam" id="PF00100">
    <property type="entry name" value="Zona_pellucida"/>
    <property type="match status" value="1"/>
</dbReference>
<dbReference type="Pfam" id="PF23344">
    <property type="entry name" value="ZP-N"/>
    <property type="match status" value="1"/>
</dbReference>
<dbReference type="PRINTS" id="PR00258">
    <property type="entry name" value="SPERACTRCPTR"/>
</dbReference>
<dbReference type="SMART" id="SM00042">
    <property type="entry name" value="CUB"/>
    <property type="match status" value="2"/>
</dbReference>
<dbReference type="SMART" id="SM00202">
    <property type="entry name" value="SR"/>
    <property type="match status" value="8"/>
</dbReference>
<dbReference type="SMART" id="SM00241">
    <property type="entry name" value="ZP"/>
    <property type="match status" value="1"/>
</dbReference>
<dbReference type="SUPFAM" id="SSF49854">
    <property type="entry name" value="Spermadhesin, CUB domain"/>
    <property type="match status" value="2"/>
</dbReference>
<dbReference type="SUPFAM" id="SSF56487">
    <property type="entry name" value="SRCR-like"/>
    <property type="match status" value="8"/>
</dbReference>
<dbReference type="PROSITE" id="PS01180">
    <property type="entry name" value="CUB"/>
    <property type="match status" value="2"/>
</dbReference>
<dbReference type="PROSITE" id="PS00420">
    <property type="entry name" value="SRCR_1"/>
    <property type="match status" value="6"/>
</dbReference>
<dbReference type="PROSITE" id="PS50287">
    <property type="entry name" value="SRCR_2"/>
    <property type="match status" value="8"/>
</dbReference>
<dbReference type="PROSITE" id="PS00682">
    <property type="entry name" value="ZP_1"/>
    <property type="match status" value="1"/>
</dbReference>
<dbReference type="PROSITE" id="PS51034">
    <property type="entry name" value="ZP_2"/>
    <property type="match status" value="1"/>
</dbReference>
<proteinExistence type="evidence at protein level"/>
<accession>Q95218</accession>
<accession>Q95219</accession>
<accession>Q9TV20</accession>
<accession>Q9TV21</accession>
<accession>Q9TV22</accession>